<feature type="chain" id="PRO_0000262948" description="Intermembrane lipid transfer protein VPS13A">
    <location>
        <begin position="1"/>
        <end position="3166"/>
    </location>
</feature>
<feature type="domain" description="Chorein N-terminal" evidence="3">
    <location>
        <begin position="3"/>
        <end position="116"/>
    </location>
</feature>
<feature type="repeat" description="TPR 1" evidence="3">
    <location>
        <begin position="212"/>
        <end position="245"/>
    </location>
</feature>
<feature type="repeat" description="TPR 2" evidence="3">
    <location>
        <begin position="373"/>
        <end position="406"/>
    </location>
</feature>
<feature type="repeat" description="TPR 3" evidence="3">
    <location>
        <begin position="1806"/>
        <end position="1840"/>
    </location>
</feature>
<feature type="repeat" description="TPR 4" evidence="3">
    <location>
        <begin position="1999"/>
        <end position="2034"/>
    </location>
</feature>
<feature type="domain" description="SHR-BD" evidence="3">
    <location>
        <begin position="2202"/>
        <end position="2447"/>
    </location>
</feature>
<feature type="repeat" description="TPR 5" evidence="3">
    <location>
        <begin position="2716"/>
        <end position="2750"/>
    </location>
</feature>
<feature type="repeat" description="TPR 6" evidence="3">
    <location>
        <begin position="2852"/>
        <end position="2890"/>
    </location>
</feature>
<feature type="region of interest" description="Disordered" evidence="4">
    <location>
        <begin position="1343"/>
        <end position="1365"/>
    </location>
</feature>
<feature type="region of interest" description="Required for mitochondrial localization" evidence="2">
    <location>
        <begin position="2607"/>
        <end position="3166"/>
    </location>
</feature>
<feature type="region of interest" description="Required for mitochondrial localization" evidence="2">
    <location>
        <begin position="2743"/>
        <end position="3166"/>
    </location>
</feature>
<feature type="region of interest" description="Required for lipid droplet localization" evidence="2">
    <location>
        <begin position="2945"/>
        <end position="3019"/>
    </location>
</feature>
<feature type="short sequence motif" description="FFAT" evidence="2">
    <location>
        <begin position="838"/>
        <end position="844"/>
    </location>
</feature>
<feature type="compositionally biased region" description="Polar residues" evidence="4">
    <location>
        <begin position="1343"/>
        <end position="1359"/>
    </location>
</feature>
<feature type="modified residue" description="Phosphothreonine" evidence="17">
    <location>
        <position position="831"/>
    </location>
</feature>
<feature type="modified residue" description="Phosphoserine" evidence="17">
    <location>
        <position position="835"/>
    </location>
</feature>
<feature type="modified residue" description="Phosphoserine" evidence="2">
    <location>
        <position position="1410"/>
    </location>
</feature>
<feature type="splice variant" id="VSP_052241" description="In isoform 2." evidence="8">
    <original>VMENGR</original>
    <variation>ASKSLI</variation>
    <location>
        <begin position="3056"/>
        <end position="3061"/>
    </location>
</feature>
<feature type="splice variant" id="VSP_052242" description="In isoform 2." evidence="8">
    <location>
        <begin position="3062"/>
        <end position="3166"/>
    </location>
</feature>
<evidence type="ECO:0000250" key="1">
    <source>
        <dbReference type="UniProtKB" id="Q07878"/>
    </source>
</evidence>
<evidence type="ECO:0000250" key="2">
    <source>
        <dbReference type="UniProtKB" id="Q96RL7"/>
    </source>
</evidence>
<evidence type="ECO:0000255" key="3"/>
<evidence type="ECO:0000256" key="4">
    <source>
        <dbReference type="SAM" id="MobiDB-lite"/>
    </source>
</evidence>
<evidence type="ECO:0000269" key="5">
    <source>
    </source>
</evidence>
<evidence type="ECO:0000269" key="6">
    <source>
    </source>
</evidence>
<evidence type="ECO:0000269" key="7">
    <source ref="3"/>
</evidence>
<evidence type="ECO:0000303" key="8">
    <source ref="3"/>
</evidence>
<evidence type="ECO:0000305" key="9"/>
<evidence type="ECO:0000312" key="10">
    <source>
        <dbReference type="EMBL" id="AAH50055.1"/>
    </source>
</evidence>
<evidence type="ECO:0000312" key="11">
    <source>
        <dbReference type="EMBL" id="BAC35101.1"/>
    </source>
</evidence>
<evidence type="ECO:0000312" key="12">
    <source>
        <dbReference type="EMBL" id="BAD89296.1"/>
    </source>
</evidence>
<evidence type="ECO:0000312" key="13">
    <source>
        <dbReference type="EMBL" id="BAD90423.1"/>
    </source>
</evidence>
<evidence type="ECO:0000312" key="14">
    <source>
        <dbReference type="EMBL" id="BAE22761.1"/>
    </source>
</evidence>
<evidence type="ECO:0000312" key="15">
    <source>
        <dbReference type="EMBL" id="BAE25075.1"/>
    </source>
</evidence>
<evidence type="ECO:0000312" key="16">
    <source>
        <dbReference type="MGI" id="MGI:2444304"/>
    </source>
</evidence>
<evidence type="ECO:0007744" key="17">
    <source>
    </source>
</evidence>
<accession>Q5H8C4</accession>
<accession>Q3UQG7</accession>
<accession>Q3UX03</accession>
<accession>Q5DU08</accession>
<accession>Q80YV7</accession>
<accession>Q8C722</accession>
<organism>
    <name type="scientific">Mus musculus</name>
    <name type="common">Mouse</name>
    <dbReference type="NCBI Taxonomy" id="10090"/>
    <lineage>
        <taxon>Eukaryota</taxon>
        <taxon>Metazoa</taxon>
        <taxon>Chordata</taxon>
        <taxon>Craniata</taxon>
        <taxon>Vertebrata</taxon>
        <taxon>Euteleostomi</taxon>
        <taxon>Mammalia</taxon>
        <taxon>Eutheria</taxon>
        <taxon>Euarchontoglires</taxon>
        <taxon>Glires</taxon>
        <taxon>Rodentia</taxon>
        <taxon>Myomorpha</taxon>
        <taxon>Muroidea</taxon>
        <taxon>Muridae</taxon>
        <taxon>Murinae</taxon>
        <taxon>Mus</taxon>
        <taxon>Mus</taxon>
    </lineage>
</organism>
<reference evidence="9 12" key="1">
    <citation type="journal article" date="2005" name="J. Neurochem.">
        <title>A gene-targeted mouse model for chorea-acanthocytosis.</title>
        <authorList>
            <person name="Tomemori Y."/>
            <person name="Ichiba M."/>
            <person name="Kusumoto A."/>
            <person name="Mizuno E."/>
            <person name="Sato D."/>
            <person name="Muroya S."/>
            <person name="Nakamura M."/>
            <person name="Kawaguchi H."/>
            <person name="Yoshida H."/>
            <person name="Ueno S."/>
            <person name="Nakao K."/>
            <person name="Nakamura K."/>
            <person name="Aiba A."/>
            <person name="Katsuki M."/>
            <person name="Sano A."/>
        </authorList>
    </citation>
    <scope>NUCLEOTIDE SEQUENCE [MRNA] (ISOFORM 1)</scope>
    <scope>DISRUPTION PHENOTYPE</scope>
    <source>
        <strain evidence="12">C57BL/6J</strain>
        <tissue evidence="12">Brain</tissue>
    </source>
</reference>
<reference evidence="9 15" key="2">
    <citation type="journal article" date="2005" name="Science">
        <title>The transcriptional landscape of the mammalian genome.</title>
        <authorList>
            <person name="Carninci P."/>
            <person name="Kasukawa T."/>
            <person name="Katayama S."/>
            <person name="Gough J."/>
            <person name="Frith M.C."/>
            <person name="Maeda N."/>
            <person name="Oyama R."/>
            <person name="Ravasi T."/>
            <person name="Lenhard B."/>
            <person name="Wells C."/>
            <person name="Kodzius R."/>
            <person name="Shimokawa K."/>
            <person name="Bajic V.B."/>
            <person name="Brenner S.E."/>
            <person name="Batalov S."/>
            <person name="Forrest A.R."/>
            <person name="Zavolan M."/>
            <person name="Davis M.J."/>
            <person name="Wilming L.G."/>
            <person name="Aidinis V."/>
            <person name="Allen J.E."/>
            <person name="Ambesi-Impiombato A."/>
            <person name="Apweiler R."/>
            <person name="Aturaliya R.N."/>
            <person name="Bailey T.L."/>
            <person name="Bansal M."/>
            <person name="Baxter L."/>
            <person name="Beisel K.W."/>
            <person name="Bersano T."/>
            <person name="Bono H."/>
            <person name="Chalk A.M."/>
            <person name="Chiu K.P."/>
            <person name="Choudhary V."/>
            <person name="Christoffels A."/>
            <person name="Clutterbuck D.R."/>
            <person name="Crowe M.L."/>
            <person name="Dalla E."/>
            <person name="Dalrymple B.P."/>
            <person name="de Bono B."/>
            <person name="Della Gatta G."/>
            <person name="di Bernardo D."/>
            <person name="Down T."/>
            <person name="Engstrom P."/>
            <person name="Fagiolini M."/>
            <person name="Faulkner G."/>
            <person name="Fletcher C.F."/>
            <person name="Fukushima T."/>
            <person name="Furuno M."/>
            <person name="Futaki S."/>
            <person name="Gariboldi M."/>
            <person name="Georgii-Hemming P."/>
            <person name="Gingeras T.R."/>
            <person name="Gojobori T."/>
            <person name="Green R.E."/>
            <person name="Gustincich S."/>
            <person name="Harbers M."/>
            <person name="Hayashi Y."/>
            <person name="Hensch T.K."/>
            <person name="Hirokawa N."/>
            <person name="Hill D."/>
            <person name="Huminiecki L."/>
            <person name="Iacono M."/>
            <person name="Ikeo K."/>
            <person name="Iwama A."/>
            <person name="Ishikawa T."/>
            <person name="Jakt M."/>
            <person name="Kanapin A."/>
            <person name="Katoh M."/>
            <person name="Kawasawa Y."/>
            <person name="Kelso J."/>
            <person name="Kitamura H."/>
            <person name="Kitano H."/>
            <person name="Kollias G."/>
            <person name="Krishnan S.P."/>
            <person name="Kruger A."/>
            <person name="Kummerfeld S.K."/>
            <person name="Kurochkin I.V."/>
            <person name="Lareau L.F."/>
            <person name="Lazarevic D."/>
            <person name="Lipovich L."/>
            <person name="Liu J."/>
            <person name="Liuni S."/>
            <person name="McWilliam S."/>
            <person name="Madan Babu M."/>
            <person name="Madera M."/>
            <person name="Marchionni L."/>
            <person name="Matsuda H."/>
            <person name="Matsuzawa S."/>
            <person name="Miki H."/>
            <person name="Mignone F."/>
            <person name="Miyake S."/>
            <person name="Morris K."/>
            <person name="Mottagui-Tabar S."/>
            <person name="Mulder N."/>
            <person name="Nakano N."/>
            <person name="Nakauchi H."/>
            <person name="Ng P."/>
            <person name="Nilsson R."/>
            <person name="Nishiguchi S."/>
            <person name="Nishikawa S."/>
            <person name="Nori F."/>
            <person name="Ohara O."/>
            <person name="Okazaki Y."/>
            <person name="Orlando V."/>
            <person name="Pang K.C."/>
            <person name="Pavan W.J."/>
            <person name="Pavesi G."/>
            <person name="Pesole G."/>
            <person name="Petrovsky N."/>
            <person name="Piazza S."/>
            <person name="Reed J."/>
            <person name="Reid J.F."/>
            <person name="Ring B.Z."/>
            <person name="Ringwald M."/>
            <person name="Rost B."/>
            <person name="Ruan Y."/>
            <person name="Salzberg S.L."/>
            <person name="Sandelin A."/>
            <person name="Schneider C."/>
            <person name="Schoenbach C."/>
            <person name="Sekiguchi K."/>
            <person name="Semple C.A."/>
            <person name="Seno S."/>
            <person name="Sessa L."/>
            <person name="Sheng Y."/>
            <person name="Shibata Y."/>
            <person name="Shimada H."/>
            <person name="Shimada K."/>
            <person name="Silva D."/>
            <person name="Sinclair B."/>
            <person name="Sperling S."/>
            <person name="Stupka E."/>
            <person name="Sugiura K."/>
            <person name="Sultana R."/>
            <person name="Takenaka Y."/>
            <person name="Taki K."/>
            <person name="Tammoja K."/>
            <person name="Tan S.L."/>
            <person name="Tang S."/>
            <person name="Taylor M.S."/>
            <person name="Tegner J."/>
            <person name="Teichmann S.A."/>
            <person name="Ueda H.R."/>
            <person name="van Nimwegen E."/>
            <person name="Verardo R."/>
            <person name="Wei C.L."/>
            <person name="Yagi K."/>
            <person name="Yamanishi H."/>
            <person name="Zabarovsky E."/>
            <person name="Zhu S."/>
            <person name="Zimmer A."/>
            <person name="Hide W."/>
            <person name="Bult C."/>
            <person name="Grimmond S.M."/>
            <person name="Teasdale R.D."/>
            <person name="Liu E.T."/>
            <person name="Brusic V."/>
            <person name="Quackenbush J."/>
            <person name="Wahlestedt C."/>
            <person name="Mattick J.S."/>
            <person name="Hume D.A."/>
            <person name="Kai C."/>
            <person name="Sasaki D."/>
            <person name="Tomaru Y."/>
            <person name="Fukuda S."/>
            <person name="Kanamori-Katayama M."/>
            <person name="Suzuki M."/>
            <person name="Aoki J."/>
            <person name="Arakawa T."/>
            <person name="Iida J."/>
            <person name="Imamura K."/>
            <person name="Itoh M."/>
            <person name="Kato T."/>
            <person name="Kawaji H."/>
            <person name="Kawagashira N."/>
            <person name="Kawashima T."/>
            <person name="Kojima M."/>
            <person name="Kondo S."/>
            <person name="Konno H."/>
            <person name="Nakano K."/>
            <person name="Ninomiya N."/>
            <person name="Nishio T."/>
            <person name="Okada M."/>
            <person name="Plessy C."/>
            <person name="Shibata K."/>
            <person name="Shiraki T."/>
            <person name="Suzuki S."/>
            <person name="Tagami M."/>
            <person name="Waki K."/>
            <person name="Watahiki A."/>
            <person name="Okamura-Oho Y."/>
            <person name="Suzuki H."/>
            <person name="Kawai J."/>
            <person name="Hayashizaki Y."/>
        </authorList>
    </citation>
    <scope>NUCLEOTIDE SEQUENCE [LARGE SCALE MRNA] OF 1-368; 875-1696 AND 1896-2816</scope>
    <source>
        <strain evidence="15">C57BL/6J</strain>
        <tissue evidence="14">Egg</tissue>
        <tissue evidence="11">Kidney</tissue>
        <tissue evidence="15">Stomach</tissue>
    </source>
</reference>
<reference evidence="9 13" key="3">
    <citation type="submission" date="2005-02" db="EMBL/GenBank/DDBJ databases">
        <title>Prediction of the coding sequences of mouse homologues of KIAA gene. The complete nucleotide sequences of mouse KIAA-homologous cDNAs identified by screening of terminal sequences of cDNA clones randomly sampled from size-fractionated libraries.</title>
        <authorList>
            <person name="Okazaki N."/>
            <person name="Kikuno R.F."/>
            <person name="Ohara R."/>
            <person name="Inamoto S."/>
            <person name="Nagase T."/>
            <person name="Ohara O."/>
            <person name="Koga H."/>
        </authorList>
    </citation>
    <scope>NUCLEOTIDE SEQUENCE [LARGE SCALE MRNA] OF 2141-3166 (ISOFORM 2)</scope>
    <source>
        <tissue evidence="13">Fetal brain</tissue>
    </source>
</reference>
<reference evidence="9 10" key="4">
    <citation type="journal article" date="2004" name="Genome Res.">
        <title>The status, quality, and expansion of the NIH full-length cDNA project: the Mammalian Gene Collection (MGC).</title>
        <authorList>
            <consortium name="The MGC Project Team"/>
        </authorList>
    </citation>
    <scope>NUCLEOTIDE SEQUENCE [LARGE SCALE MRNA] OF 2477-3166 (ISOFORM 1)</scope>
    <source>
        <tissue evidence="10">Pancreas</tissue>
    </source>
</reference>
<reference key="5">
    <citation type="journal article" date="2010" name="Cell">
        <title>A tissue-specific atlas of mouse protein phosphorylation and expression.</title>
        <authorList>
            <person name="Huttlin E.L."/>
            <person name="Jedrychowski M.P."/>
            <person name="Elias J.E."/>
            <person name="Goswami T."/>
            <person name="Rad R."/>
            <person name="Beausoleil S.A."/>
            <person name="Villen J."/>
            <person name="Haas W."/>
            <person name="Sowa M.E."/>
            <person name="Gygi S.P."/>
        </authorList>
    </citation>
    <scope>PHOSPHORYLATION [LARGE SCALE ANALYSIS] AT THR-831 AND SER-835</scope>
    <scope>IDENTIFICATION BY MASS SPECTROMETRY [LARGE SCALE ANALYSIS]</scope>
    <source>
        <tissue>Brain</tissue>
        <tissue>Brown adipose tissue</tissue>
        <tissue>Heart</tissue>
        <tissue>Kidney</tissue>
        <tissue>Liver</tissue>
        <tissue>Lung</tissue>
        <tissue>Pancreas</tissue>
        <tissue>Spleen</tissue>
        <tissue>Testis</tissue>
    </source>
</reference>
<reference key="6">
    <citation type="journal article" date="2012" name="Biochem. Biophys. Res. Commun.">
        <title>Subcellular localization and putative role of VPS13A/chorein in dopaminergic neuronal cells.</title>
        <authorList>
            <person name="Hayashi T."/>
            <person name="Kishida M."/>
            <person name="Nishizawa Y."/>
            <person name="Iijima M."/>
            <person name="Koriyama C."/>
            <person name="Nakamura M."/>
            <person name="Sano A."/>
            <person name="Kishida S."/>
        </authorList>
    </citation>
    <scope>SUBCELLULAR LOCATION</scope>
</reference>
<name>VP13A_MOUSE</name>
<proteinExistence type="evidence at protein level"/>
<dbReference type="EMBL" id="AB115421">
    <property type="protein sequence ID" value="BAD89296.1"/>
    <property type="molecule type" value="mRNA"/>
</dbReference>
<dbReference type="EMBL" id="AK052697">
    <property type="protein sequence ID" value="BAC35101.1"/>
    <property type="molecule type" value="mRNA"/>
</dbReference>
<dbReference type="EMBL" id="AK135983">
    <property type="protein sequence ID" value="BAE22761.1"/>
    <property type="status" value="ALT_SEQ"/>
    <property type="molecule type" value="mRNA"/>
</dbReference>
<dbReference type="EMBL" id="AK142462">
    <property type="protein sequence ID" value="BAE25075.1"/>
    <property type="molecule type" value="mRNA"/>
</dbReference>
<dbReference type="EMBL" id="AK220362">
    <property type="protein sequence ID" value="BAD90423.1"/>
    <property type="molecule type" value="mRNA"/>
</dbReference>
<dbReference type="EMBL" id="BC050055">
    <property type="protein sequence ID" value="AAH50055.1"/>
    <property type="molecule type" value="mRNA"/>
</dbReference>
<dbReference type="CCDS" id="CCDS37929.1">
    <molecule id="Q5H8C4-1"/>
</dbReference>
<dbReference type="RefSeq" id="NP_766616.2">
    <molecule id="Q5H8C4-1"/>
    <property type="nucleotide sequence ID" value="NM_173028.4"/>
</dbReference>
<dbReference type="RefSeq" id="XP_006527189.1">
    <molecule id="Q5H8C4-2"/>
    <property type="nucleotide sequence ID" value="XM_006527126.4"/>
</dbReference>
<dbReference type="SMR" id="Q5H8C4"/>
<dbReference type="BioGRID" id="234844">
    <property type="interactions" value="10"/>
</dbReference>
<dbReference type="FunCoup" id="Q5H8C4">
    <property type="interactions" value="2180"/>
</dbReference>
<dbReference type="STRING" id="10090.ENSMUSP00000068716"/>
<dbReference type="GlyGen" id="Q5H8C4">
    <property type="glycosylation" value="4 sites, 2 N-linked glycans (2 sites), 1 O-linked glycan (2 sites)"/>
</dbReference>
<dbReference type="iPTMnet" id="Q5H8C4"/>
<dbReference type="PhosphoSitePlus" id="Q5H8C4"/>
<dbReference type="SwissPalm" id="Q5H8C4"/>
<dbReference type="jPOST" id="Q5H8C4"/>
<dbReference type="PaxDb" id="10090-ENSMUSP00000068716"/>
<dbReference type="PeptideAtlas" id="Q5H8C4"/>
<dbReference type="ProteomicsDB" id="297962">
    <molecule id="Q5H8C4-1"/>
</dbReference>
<dbReference type="ProteomicsDB" id="297963">
    <molecule id="Q5H8C4-2"/>
</dbReference>
<dbReference type="Pumba" id="Q5H8C4"/>
<dbReference type="Antibodypedia" id="12840">
    <property type="antibodies" value="31 antibodies from 14 providers"/>
</dbReference>
<dbReference type="DNASU" id="271564"/>
<dbReference type="Ensembl" id="ENSMUST00000068156.8">
    <molecule id="Q5H8C4-1"/>
    <property type="protein sequence ID" value="ENSMUSP00000068716.7"/>
    <property type="gene ID" value="ENSMUSG00000046230.12"/>
</dbReference>
<dbReference type="GeneID" id="271564"/>
<dbReference type="KEGG" id="mmu:271564"/>
<dbReference type="UCSC" id="uc008gwv.2">
    <molecule id="Q5H8C4-1"/>
    <property type="organism name" value="mouse"/>
</dbReference>
<dbReference type="AGR" id="MGI:2444304"/>
<dbReference type="CTD" id="23230"/>
<dbReference type="MGI" id="MGI:2444304">
    <property type="gene designation" value="Vps13a"/>
</dbReference>
<dbReference type="VEuPathDB" id="HostDB:ENSMUSG00000046230"/>
<dbReference type="eggNOG" id="KOG1809">
    <property type="taxonomic scope" value="Eukaryota"/>
</dbReference>
<dbReference type="GeneTree" id="ENSGT00950000183083"/>
<dbReference type="HOGENOM" id="CLU_000135_1_1_1"/>
<dbReference type="InParanoid" id="Q5H8C4"/>
<dbReference type="OMA" id="CEWQYTF"/>
<dbReference type="OrthoDB" id="428159at2759"/>
<dbReference type="PhylomeDB" id="Q5H8C4"/>
<dbReference type="TreeFam" id="TF300316"/>
<dbReference type="BioGRID-ORCS" id="271564">
    <property type="hits" value="12 hits in 78 CRISPR screens"/>
</dbReference>
<dbReference type="CD-CODE" id="CE726F99">
    <property type="entry name" value="Postsynaptic density"/>
</dbReference>
<dbReference type="ChiTaRS" id="Vps13a">
    <property type="organism name" value="mouse"/>
</dbReference>
<dbReference type="PRO" id="PR:Q5H8C4"/>
<dbReference type="Proteomes" id="UP000000589">
    <property type="component" value="Chromosome 19"/>
</dbReference>
<dbReference type="RNAct" id="Q5H8C4">
    <property type="molecule type" value="protein"/>
</dbReference>
<dbReference type="Bgee" id="ENSMUSG00000046230">
    <property type="expression patterns" value="Expressed in spermatocyte and 215 other cell types or tissues"/>
</dbReference>
<dbReference type="ExpressionAtlas" id="Q5H8C4">
    <property type="expression patterns" value="baseline and differential"/>
</dbReference>
<dbReference type="GO" id="GO:0031045">
    <property type="term" value="C:dense core granule"/>
    <property type="evidence" value="ECO:0000314"/>
    <property type="project" value="MGI"/>
</dbReference>
<dbReference type="GO" id="GO:0005783">
    <property type="term" value="C:endoplasmic reticulum"/>
    <property type="evidence" value="ECO:0000314"/>
    <property type="project" value="MGI"/>
</dbReference>
<dbReference type="GO" id="GO:0005789">
    <property type="term" value="C:endoplasmic reticulum membrane"/>
    <property type="evidence" value="ECO:0000250"/>
    <property type="project" value="UniProtKB"/>
</dbReference>
<dbReference type="GO" id="GO:0010008">
    <property type="term" value="C:endosome membrane"/>
    <property type="evidence" value="ECO:0000250"/>
    <property type="project" value="UniProtKB"/>
</dbReference>
<dbReference type="GO" id="GO:0005794">
    <property type="term" value="C:Golgi apparatus"/>
    <property type="evidence" value="ECO:0000314"/>
    <property type="project" value="UniProtKB"/>
</dbReference>
<dbReference type="GO" id="GO:0005811">
    <property type="term" value="C:lipid droplet"/>
    <property type="evidence" value="ECO:0000250"/>
    <property type="project" value="UniProtKB"/>
</dbReference>
<dbReference type="GO" id="GO:0005765">
    <property type="term" value="C:lysosomal membrane"/>
    <property type="evidence" value="ECO:0000250"/>
    <property type="project" value="UniProtKB"/>
</dbReference>
<dbReference type="GO" id="GO:0044233">
    <property type="term" value="C:mitochondria-associated endoplasmic reticulum membrane contact site"/>
    <property type="evidence" value="ECO:0000250"/>
    <property type="project" value="UniProtKB"/>
</dbReference>
<dbReference type="GO" id="GO:0031966">
    <property type="term" value="C:mitochondrial membrane"/>
    <property type="evidence" value="ECO:0000250"/>
    <property type="project" value="UniProtKB"/>
</dbReference>
<dbReference type="GO" id="GO:0005741">
    <property type="term" value="C:mitochondrial outer membrane"/>
    <property type="evidence" value="ECO:0000250"/>
    <property type="project" value="UniProtKB"/>
</dbReference>
<dbReference type="GO" id="GO:0005739">
    <property type="term" value="C:mitochondrion"/>
    <property type="evidence" value="ECO:0000314"/>
    <property type="project" value="MGI"/>
</dbReference>
<dbReference type="GO" id="GO:0043005">
    <property type="term" value="C:neuron projection"/>
    <property type="evidence" value="ECO:0000314"/>
    <property type="project" value="MGI"/>
</dbReference>
<dbReference type="GO" id="GO:0043025">
    <property type="term" value="C:neuronal cell body"/>
    <property type="evidence" value="ECO:0000314"/>
    <property type="project" value="MGI"/>
</dbReference>
<dbReference type="GO" id="GO:0099013">
    <property type="term" value="C:neuronal dense core vesicle lumen"/>
    <property type="evidence" value="ECO:0000314"/>
    <property type="project" value="UniProtKB"/>
</dbReference>
<dbReference type="GO" id="GO:0097225">
    <property type="term" value="C:sperm midpiece"/>
    <property type="evidence" value="ECO:0000314"/>
    <property type="project" value="MGI"/>
</dbReference>
<dbReference type="GO" id="GO:0008344">
    <property type="term" value="P:adult locomotory behavior"/>
    <property type="evidence" value="ECO:0000315"/>
    <property type="project" value="MGI"/>
</dbReference>
<dbReference type="GO" id="GO:0006914">
    <property type="term" value="P:autophagy"/>
    <property type="evidence" value="ECO:0000315"/>
    <property type="project" value="MGI"/>
</dbReference>
<dbReference type="GO" id="GO:0031547">
    <property type="term" value="P:brain-derived neurotrophic factor receptor signaling pathway"/>
    <property type="evidence" value="ECO:0000315"/>
    <property type="project" value="MGI"/>
</dbReference>
<dbReference type="GO" id="GO:0000902">
    <property type="term" value="P:cell morphogenesis"/>
    <property type="evidence" value="ECO:0000315"/>
    <property type="project" value="MGI"/>
</dbReference>
<dbReference type="GO" id="GO:0071470">
    <property type="term" value="P:cellular response to osmotic stress"/>
    <property type="evidence" value="ECO:0000315"/>
    <property type="project" value="MGI"/>
</dbReference>
<dbReference type="GO" id="GO:0030218">
    <property type="term" value="P:erythrocyte differentiation"/>
    <property type="evidence" value="ECO:0000315"/>
    <property type="project" value="MGI"/>
</dbReference>
<dbReference type="GO" id="GO:0035640">
    <property type="term" value="P:exploration behavior"/>
    <property type="evidence" value="ECO:0000315"/>
    <property type="project" value="MGI"/>
</dbReference>
<dbReference type="GO" id="GO:0030317">
    <property type="term" value="P:flagellated sperm motility"/>
    <property type="evidence" value="ECO:0000315"/>
    <property type="project" value="MGI"/>
</dbReference>
<dbReference type="GO" id="GO:0010467">
    <property type="term" value="P:gene expression"/>
    <property type="evidence" value="ECO:0000315"/>
    <property type="project" value="MGI"/>
</dbReference>
<dbReference type="GO" id="GO:0006869">
    <property type="term" value="P:lipid transport"/>
    <property type="evidence" value="ECO:0007669"/>
    <property type="project" value="UniProtKB-KW"/>
</dbReference>
<dbReference type="GO" id="GO:0007626">
    <property type="term" value="P:locomotory behavior"/>
    <property type="evidence" value="ECO:0000315"/>
    <property type="project" value="MGI"/>
</dbReference>
<dbReference type="GO" id="GO:0060292">
    <property type="term" value="P:long-term synaptic depression"/>
    <property type="evidence" value="ECO:0000315"/>
    <property type="project" value="MGI"/>
</dbReference>
<dbReference type="GO" id="GO:1905146">
    <property type="term" value="P:lysosomal protein catabolic process"/>
    <property type="evidence" value="ECO:0000250"/>
    <property type="project" value="UniProtKB"/>
</dbReference>
<dbReference type="GO" id="GO:0014004">
    <property type="term" value="P:microglia differentiation"/>
    <property type="evidence" value="ECO:0000315"/>
    <property type="project" value="MGI"/>
</dbReference>
<dbReference type="GO" id="GO:0061744">
    <property type="term" value="P:motor behavior"/>
    <property type="evidence" value="ECO:0000315"/>
    <property type="project" value="MGI"/>
</dbReference>
<dbReference type="GO" id="GO:0035264">
    <property type="term" value="P:multicellular organism growth"/>
    <property type="evidence" value="ECO:0000315"/>
    <property type="project" value="MGI"/>
</dbReference>
<dbReference type="GO" id="GO:0007399">
    <property type="term" value="P:nervous system development"/>
    <property type="evidence" value="ECO:0000315"/>
    <property type="project" value="MGI"/>
</dbReference>
<dbReference type="GO" id="GO:0150076">
    <property type="term" value="P:neuroinflammatory response"/>
    <property type="evidence" value="ECO:0000315"/>
    <property type="project" value="MGI"/>
</dbReference>
<dbReference type="GO" id="GO:0050905">
    <property type="term" value="P:neuromuscular process"/>
    <property type="evidence" value="ECO:0000315"/>
    <property type="project" value="MGI"/>
</dbReference>
<dbReference type="GO" id="GO:0050885">
    <property type="term" value="P:neuromuscular process controlling balance"/>
    <property type="evidence" value="ECO:0000315"/>
    <property type="project" value="MGI"/>
</dbReference>
<dbReference type="GO" id="GO:0140058">
    <property type="term" value="P:neuron projection arborization"/>
    <property type="evidence" value="ECO:0000315"/>
    <property type="project" value="MGI"/>
</dbReference>
<dbReference type="GO" id="GO:0009306">
    <property type="term" value="P:protein secretion"/>
    <property type="evidence" value="ECO:0000315"/>
    <property type="project" value="MGI"/>
</dbReference>
<dbReference type="GO" id="GO:0048167">
    <property type="term" value="P:regulation of synaptic plasticity"/>
    <property type="evidence" value="ECO:0000315"/>
    <property type="project" value="MGI"/>
</dbReference>
<dbReference type="GO" id="GO:0090648">
    <property type="term" value="P:response to environmental enrichment"/>
    <property type="evidence" value="ECO:0000315"/>
    <property type="project" value="MGI"/>
</dbReference>
<dbReference type="GO" id="GO:0035176">
    <property type="term" value="P:social behavior"/>
    <property type="evidence" value="ECO:0000315"/>
    <property type="project" value="MGI"/>
</dbReference>
<dbReference type="GO" id="GO:0030382">
    <property type="term" value="P:sperm mitochondrion organization"/>
    <property type="evidence" value="ECO:0000315"/>
    <property type="project" value="MGI"/>
</dbReference>
<dbReference type="InterPro" id="IPR026847">
    <property type="entry name" value="VPS13"/>
</dbReference>
<dbReference type="InterPro" id="IPR056748">
    <property type="entry name" value="VPS13-like_C"/>
</dbReference>
<dbReference type="InterPro" id="IPR056747">
    <property type="entry name" value="VPS13-like_M"/>
</dbReference>
<dbReference type="InterPro" id="IPR026854">
    <property type="entry name" value="VPS13_N"/>
</dbReference>
<dbReference type="InterPro" id="IPR009543">
    <property type="entry name" value="VPS13_VAB"/>
</dbReference>
<dbReference type="PANTHER" id="PTHR16166:SF22">
    <property type="entry name" value="INTERMEMBRANE LIPID TRANSFER PROTEIN VPS13A"/>
    <property type="match status" value="1"/>
</dbReference>
<dbReference type="PANTHER" id="PTHR16166">
    <property type="entry name" value="VACUOLAR PROTEIN SORTING-ASSOCIATED PROTEIN VPS13"/>
    <property type="match status" value="1"/>
</dbReference>
<dbReference type="Pfam" id="PF25037">
    <property type="entry name" value="VPS13_C"/>
    <property type="match status" value="1"/>
</dbReference>
<dbReference type="Pfam" id="PF25033">
    <property type="entry name" value="VPS13_M"/>
    <property type="match status" value="1"/>
</dbReference>
<dbReference type="Pfam" id="PF12624">
    <property type="entry name" value="VPS13_N"/>
    <property type="match status" value="1"/>
</dbReference>
<dbReference type="Pfam" id="PF25036">
    <property type="entry name" value="VPS13_VAB"/>
    <property type="match status" value="1"/>
</dbReference>
<keyword id="KW-0025">Alternative splicing</keyword>
<keyword id="KW-0968">Cytoplasmic vesicle</keyword>
<keyword id="KW-0256">Endoplasmic reticulum</keyword>
<keyword id="KW-0967">Endosome</keyword>
<keyword id="KW-0333">Golgi apparatus</keyword>
<keyword id="KW-0551">Lipid droplet</keyword>
<keyword id="KW-0445">Lipid transport</keyword>
<keyword id="KW-0458">Lysosome</keyword>
<keyword id="KW-0472">Membrane</keyword>
<keyword id="KW-0496">Mitochondrion</keyword>
<keyword id="KW-1000">Mitochondrion outer membrane</keyword>
<keyword id="KW-0597">Phosphoprotein</keyword>
<keyword id="KW-1185">Reference proteome</keyword>
<keyword id="KW-0677">Repeat</keyword>
<keyword id="KW-0802">TPR repeat</keyword>
<keyword id="KW-0813">Transport</keyword>
<comment type="function">
    <text evidence="1 2">Mediates the transfer of lipids between membranes at organelle contact sites (By similarity). Required for the formation or stabilization of ER-mitochondria contact sites which enable transfer of lipids between the ER and mitochondria (By similarity). Negatively regulates lipid droplet size and motility (By similarity). Required for efficient lysosomal protein degradation (By similarity).</text>
</comment>
<comment type="subunit">
    <text evidence="2">Interacts (via FFAT motif) with VAPA and VAPB (By similarity). Interacts with RAB7A (By similarity). Interacts with XK (By similarity).</text>
</comment>
<comment type="subcellular location">
    <subcellularLocation>
        <location evidence="2">Mitochondrion outer membrane</location>
        <topology evidence="2">Peripheral membrane protein</topology>
    </subcellularLocation>
    <subcellularLocation>
        <location evidence="2">Endoplasmic reticulum membrane</location>
        <topology evidence="2">Peripheral membrane protein</topology>
    </subcellularLocation>
    <subcellularLocation>
        <location evidence="2">Endosome membrane</location>
        <topology evidence="2">Peripheral membrane protein</topology>
    </subcellularLocation>
    <subcellularLocation>
        <location evidence="2">Lysosome membrane</location>
        <topology evidence="2">Peripheral membrane protein</topology>
    </subcellularLocation>
    <subcellularLocation>
        <location evidence="2">Lipid droplet</location>
    </subcellularLocation>
    <subcellularLocation>
        <location evidence="6">Golgi apparatus</location>
    </subcellularLocation>
    <subcellularLocation>
        <location evidence="6">Cytoplasmic vesicle</location>
        <location evidence="6">Secretory vesicle</location>
        <location evidence="6">Neuronal dense core vesicle</location>
    </subcellularLocation>
    <text evidence="2">Localizes at mitochondria-endosomes and mitochondria-endoplasmic reticulum contact sites.</text>
</comment>
<comment type="alternative products">
    <event type="alternative splicing"/>
    <isoform>
        <id>Q5H8C4-1</id>
        <name evidence="5">1</name>
        <sequence type="displayed"/>
    </isoform>
    <isoform>
        <id>Q5H8C4-2</id>
        <name evidence="7">2</name>
        <sequence type="described" ref="VSP_052241 VSP_052242"/>
    </isoform>
</comment>
<comment type="domain">
    <text evidence="2">The FFAT motif is required for interaction with VAPA and VAPB and its localization to the endoplasmic reticulum.</text>
</comment>
<comment type="domain">
    <text evidence="2">The C-terminal part (3050-3166) is involved in phospholipid binding, including phosphatidylinositol 4,5-bisphosphate.</text>
</comment>
<comment type="disruption phenotype">
    <text evidence="5">Mice show defects in motor coordination, social investigation, erythrocyte morphology as well as size and morphology of the striatum. Provides a mouse model for chorea-acanthocytosis (CHAC) with a mild phenotype and late adult onset.</text>
</comment>
<comment type="similarity">
    <text evidence="3">Belongs to the VPS13 family.</text>
</comment>
<comment type="sequence caution" evidence="9">
    <conflict type="miscellaneous discrepancy">
        <sequence resource="EMBL-CDS" id="BAE22761"/>
    </conflict>
    <text>Intron retention.</text>
</comment>
<sequence length="3166" mass="359401">MVFESVVVEVLNRFLGDYVVNLDESQLSLGIWKGAVALKNLVIKENALHELDVPFKVKVGHIGSLKLKIPWKNLYTQPVEAVLEEIFLLIVPSSRIQYDPIKEEKQLMETKQQELKRIEKAKQKVFDKEKPREEKQDTFTEKLVTQIIQNLQVQISSIHIRYEDDITNGDKPLSFGISLQNISLQTTDQYWIPCLHDNTEKLVRKLIRLDNLFAYWNVNSEMFYLNDYDESLKALKNGIVNENIVPEGYDFVFRPISASAKLQMNRRSDFDFSDPKINLAVDLHTIAIEFNKPQYFSLMELLESIDMMTQNQPYRKFKPSVPLHLHAKEWWAYAIHSILEVNVCPSLRMWSWEHIRNHRYKMKRYREFYKKKLTSKKPSPEILMSLEELEKTLDVFNITIARQQAEVEAKKAGYKIYKEGVKDPEDNAGWFGWLWTWSESNANQQQDVKPGILEEMLTPEEKSLLYEAIGYSETAVDPTLPKTFEALKFFVHLKSMSIVLRENHQKPELLNVVVEGLSTSVVQRPGAQAIKFETKIDSFHITGLPDDFKKPHLLSSLDDTSLLQITFEINPLNETVAQRCTIEAEPLEIIYDARTVNSIVEFFRPPKDVHLAQLTSVTLTKLEEFRAKTATGLLYVIETQKVLDLRINVKASYVIVPQYGNFSPTSNLLLLDLGHLKVSSKRRSLLPDVRPSEASLEDIMHRAYDSFDIQLTSIQLLYSRVGDNWKEARKLNVSTQHILIPMHVNVELSKAMVFMDIKMPKFKISGKLPLVSLRISDKKLQGIMELLGSIPKPEPVTDVSAPARSFQIQASALPVSHISQKLIPLLEQPVTEDDSEEEFFDAPCSPLEECPQVSCRDKCTRQKKLQKKDCVMNLIQLRMRFEVAEVSIQFYHLVGDCELPVLEMGALGLGTEAEFRTFDLKGSAFLKELWLKCPEYLDENKKPVYLITTLDNTMEDLLTLEFMKVEKNAPNLNSTYNNVLQLIKVNFSSLDIHLHTEALLNTMNYLNNILPELREKSASVSAAEPEDKGDIIKKLALKLPTNEDIITLQLLAELSCLQIFIQDQKQNISEIKIEGLDSEMIMKPLVTEINAKLRNIIVLDSDKMAIYKKALYITGKEVFSFKMISYMDATAGYAYTDMSVVDIRVHLTVGCIEVVFITKFLYSILAFIDNFQAVKDALAEATVQAAEMAADGVKELARKSSRFALDVNIKAPVVLIPQSPVSQNVFVADFGLITMKNIFVTVTETQSNIPPVIDLITIKLSKMRLYRSQFRNDTYQEVLDLLLPLNLEVIVERNLSWEWYKEVPCFNIKAQLKPMEFILSQEDLTTVFQTLHGNIWYGQDLSAPSSANKDPETMTSGVTSPPDHSPATVVTAAVVEVHPQASQAHTMLNVSFQTDYLTMALYSPGPDEASFTDVRDPSLELAEFKLENIISSLKIYTDDSTVFSFSVKNCILDDKRSHVMKATPRMIGLTVGFDKKDMVDIKYRKIKTFVVTDAVVQEMYVCASVEFLMTVAHIFFDAYMTSTALETSVQTRTTREAPAQELGKWEMNILIKNPEIVFVADMTRNDAPALVITTQCEICCKGEPTSNTVTAAIKDLQVRACPFLPVKRKGKVTTVLQPCDLFYQATQLGRDPQMIDISVKSLTLKVSPVIINTIITITSALYTTKETVPEENTSNIAHLWDKKDTKNLKMWFLEESNESEKVVPTNEVMPGGETLNLRIDSIFIVLEAGIGHRTVPMLLAKACFSGESKNWLSLINLHCHLELEVHYYNEMFGVWEPLLEPLEIDQTDDFRPWNLGIKMKKKAKEAIVESDSEAENYKVPEYKTAISFYSRDQLNITLSKCGLVMLNNLVEAFTEAATGSSSVFLRDLAPFMIFNSLGLTVSVSPSDSFSVLNVPLAKSYELKNDESLSMDYVRTKDNDHFNAMTSLSSKLFFILLTPANHSVADKIPLTKVGRRLYTVRHRESGVERSIICQIDTVEGSKKVTIRSPVQIKNHFSIPISVFEGDTLLGIASPENEFNIPLASYRSSLSLVPEDQDYQLCEGIDFEEIIKYDGQLLKKKCRSTNPSKKSFVINIVPEKDNLASLSVYSEDGWDLPYVLHLWPPILIRNLLPYKVAYYIEGIENTVVTLSEGHSSQIYNVEMDQAKLHLKLLDYLNHDWKSEFYIRSSQQDINFINFTCLTEMEKSDLDIAIHMTYNTGQTVVAFHSPYWMVNKTNRMLQYKADGIHRKHPPNYTKPVLFSFQPNHFFNNNKVQLMVTDSELSDQFSIDTVGSHGAIRCKGLKMEYQVGVTINLSSFNITRIVTFIPFYMIKNKSKYHISVAEEGSDKWLSLDLEQSIPFWPENASNILLIQVERSEDPPKRIYFNKQDNCILLRLNNELGGIIAEVNLAEHSTVITFSDYHDGAATFLLINHTKSDPVQYNQSSLGEIEDSLPPGKAVYYTWADPVGSRKLKWSCGQSYGEVTHKDDMMTPISVGKKTIYLVSFFEGLQRIILFTEDPRVFKVTYESEKAELAELEVVLALQDVGISLVNNYTKQEVAYIGITSSDVVWEAKPKKKARWKPMSVKHTEKLEKEFREYTEASPLEDKVVELDNIPVRLTPSGNDMKILQPHVIPVRRNYLPALKVEYNTSAHQSSFRIQIYRIQIQNQIHGAIFPFVFYPIKPPRSVTMDSAPKPFTDVSIVMRSAGHSQISRIKYFKVLIQEMDLSLDLGFVYALADLVTKAEVTEKTEVEHFHKDVEAFEQEYEVVSSVDQSQVNLFEYFHISPIKLHLSVSLSSGRDEAKDSEQHGGLIPVHSLNLLLKSIGATLTDVQDVVFKLAFFELNYQFHTTSELQSEVIRHYSKQAIKQMYVLILGLDVLGNPFGLIREFSEGVEAFFYEPYQGAIQGPEEFVEGMALGLKALVGGAVGGLAGAASKITSAMAKGVAAMTMDEDYQQKRREAMNKQPAGLREGITRGGKGLVSGFVSGITGIVTKPIKGAQKEGAAGFFKGVGKGLVGAVTRPTGGIIDMASSTFQGIKRATETSEVESLRPPRFFNEDGVIRPYRLRDGSGNQMLQVMENGRFAKYKYFTHVMINKTDMFMITRRGVLFVTKGTFGQLTCEWQYTFDEFTKEPFIVHGRRLRIEAKERVKSVFHAKEFGKIVNFKTPEDARWILTKLEEAREPSPRL</sequence>
<protein>
    <recommendedName>
        <fullName evidence="2">Intermembrane lipid transfer protein VPS13A</fullName>
    </recommendedName>
    <alternativeName>
        <fullName evidence="9">Chorea-acanthocytosis protein homolog</fullName>
    </alternativeName>
    <alternativeName>
        <fullName evidence="9">Chorein</fullName>
    </alternativeName>
    <alternativeName>
        <fullName evidence="9">Vacuolar protein sorting-associated protein 13A</fullName>
    </alternativeName>
</protein>
<gene>
    <name evidence="16" type="primary">Vps13a</name>
    <name evidence="12" type="synonym">Chac</name>
    <name evidence="13" type="synonym">Kiaa0986</name>
</gene>